<sequence>MPQISRQEYAGLFGPTTGDKIRLGDTNLFIEIEKDLRGYGEESVYGGGKSLRDGMGANNNLTRDNGVLDLVITNVTIVDARLGVIKADVGIRDGKIAGIGKSGNPGVMDGVTQGMVVGVSTDAISGEHLILTAAGIDSHIHLISPQQAYHALSNGVATFFGGGIGPTDGTNGTTVTPGPWNIRQMLRSIEGLPVNVGILGKGNSYGRGPLLEQAIAGVVGYKVHEDWGATANALRHALRMADEVDIQVSVHTDSLNECGYVEDTIDAFEGRTIHTFHTEGAGGGHAPDIIRVASQTNVLPSSTNPTLPYGVNSQAELFDMIMVCHNLNPNVPADVSFAESRVRPETIAAENVLHDMGVISMFSSDSQAMGRVGENWLRILQTADAMKAARGKLPEDAAGNDNFRVLRYVAKITINPAITQGVSHVIGSVEVGKMADLVLWDPRFFGAKPKMVIKGGMINWAAMGDPNASLPTPQPVFYRPMFGAMGKTLQDTCVTFVSQAALDDGVKEKAGLDRQVIAVKNCRTISKRDLVRNDQTPNIEVDPETFAVKVDGVHATCEPIATASMNQRYFFG</sequence>
<reference key="1">
    <citation type="submission" date="2008-04" db="EMBL/GenBank/DDBJ databases">
        <title>Complete sequence of Yersinia pseudotuberculosis PB1/+.</title>
        <authorList>
            <person name="Copeland A."/>
            <person name="Lucas S."/>
            <person name="Lapidus A."/>
            <person name="Glavina del Rio T."/>
            <person name="Dalin E."/>
            <person name="Tice H."/>
            <person name="Bruce D."/>
            <person name="Goodwin L."/>
            <person name="Pitluck S."/>
            <person name="Munk A.C."/>
            <person name="Brettin T."/>
            <person name="Detter J.C."/>
            <person name="Han C."/>
            <person name="Tapia R."/>
            <person name="Schmutz J."/>
            <person name="Larimer F."/>
            <person name="Land M."/>
            <person name="Hauser L."/>
            <person name="Challacombe J.F."/>
            <person name="Green L."/>
            <person name="Lindler L.E."/>
            <person name="Nikolich M.P."/>
            <person name="Richardson P."/>
        </authorList>
    </citation>
    <scope>NUCLEOTIDE SEQUENCE [LARGE SCALE GENOMIC DNA]</scope>
    <source>
        <strain>PB1/+</strain>
    </source>
</reference>
<evidence type="ECO:0000255" key="1">
    <source>
        <dbReference type="HAMAP-Rule" id="MF_01953"/>
    </source>
</evidence>
<protein>
    <recommendedName>
        <fullName evidence="1">Urease subunit alpha</fullName>
        <ecNumber evidence="1">3.5.1.5</ecNumber>
    </recommendedName>
    <alternativeName>
        <fullName evidence="1">Urea amidohydrolase subunit alpha</fullName>
    </alternativeName>
</protein>
<proteinExistence type="inferred from homology"/>
<feature type="chain" id="PRO_1000188898" description="Urease subunit alpha">
    <location>
        <begin position="1"/>
        <end position="572"/>
    </location>
</feature>
<feature type="domain" description="Urease" evidence="1">
    <location>
        <begin position="134"/>
        <end position="572"/>
    </location>
</feature>
<feature type="active site" description="Proton donor" evidence="1">
    <location>
        <position position="325"/>
    </location>
</feature>
<feature type="binding site" evidence="1">
    <location>
        <position position="139"/>
    </location>
    <ligand>
        <name>Ni(2+)</name>
        <dbReference type="ChEBI" id="CHEBI:49786"/>
        <label>1</label>
    </ligand>
</feature>
<feature type="binding site" evidence="1">
    <location>
        <position position="141"/>
    </location>
    <ligand>
        <name>Ni(2+)</name>
        <dbReference type="ChEBI" id="CHEBI:49786"/>
        <label>1</label>
    </ligand>
</feature>
<feature type="binding site" description="via carbamate group" evidence="1">
    <location>
        <position position="222"/>
    </location>
    <ligand>
        <name>Ni(2+)</name>
        <dbReference type="ChEBI" id="CHEBI:49786"/>
        <label>1</label>
    </ligand>
</feature>
<feature type="binding site" description="via carbamate group" evidence="1">
    <location>
        <position position="222"/>
    </location>
    <ligand>
        <name>Ni(2+)</name>
        <dbReference type="ChEBI" id="CHEBI:49786"/>
        <label>2</label>
    </ligand>
</feature>
<feature type="binding site" evidence="1">
    <location>
        <position position="224"/>
    </location>
    <ligand>
        <name>substrate</name>
    </ligand>
</feature>
<feature type="binding site" evidence="1">
    <location>
        <position position="251"/>
    </location>
    <ligand>
        <name>Ni(2+)</name>
        <dbReference type="ChEBI" id="CHEBI:49786"/>
        <label>2</label>
    </ligand>
</feature>
<feature type="binding site" evidence="1">
    <location>
        <position position="277"/>
    </location>
    <ligand>
        <name>Ni(2+)</name>
        <dbReference type="ChEBI" id="CHEBI:49786"/>
        <label>2</label>
    </ligand>
</feature>
<feature type="binding site" evidence="1">
    <location>
        <position position="365"/>
    </location>
    <ligand>
        <name>Ni(2+)</name>
        <dbReference type="ChEBI" id="CHEBI:49786"/>
        <label>1</label>
    </ligand>
</feature>
<feature type="modified residue" description="N6-carboxylysine" evidence="1">
    <location>
        <position position="222"/>
    </location>
</feature>
<name>URE1_YERPB</name>
<dbReference type="EC" id="3.5.1.5" evidence="1"/>
<dbReference type="EMBL" id="CP001048">
    <property type="protein sequence ID" value="ACC90015.1"/>
    <property type="molecule type" value="Genomic_DNA"/>
</dbReference>
<dbReference type="RefSeq" id="WP_002212229.1">
    <property type="nucleotide sequence ID" value="NZ_CP009780.1"/>
</dbReference>
<dbReference type="SMR" id="B2KAA4"/>
<dbReference type="MEROPS" id="M38.982"/>
<dbReference type="KEGG" id="ypb:YPTS_3058"/>
<dbReference type="PATRIC" id="fig|502801.10.peg.2490"/>
<dbReference type="UniPathway" id="UPA00258">
    <property type="reaction ID" value="UER00370"/>
</dbReference>
<dbReference type="GO" id="GO:0005737">
    <property type="term" value="C:cytoplasm"/>
    <property type="evidence" value="ECO:0007669"/>
    <property type="project" value="UniProtKB-SubCell"/>
</dbReference>
<dbReference type="GO" id="GO:0016151">
    <property type="term" value="F:nickel cation binding"/>
    <property type="evidence" value="ECO:0007669"/>
    <property type="project" value="UniProtKB-UniRule"/>
</dbReference>
<dbReference type="GO" id="GO:0009039">
    <property type="term" value="F:urease activity"/>
    <property type="evidence" value="ECO:0007669"/>
    <property type="project" value="UniProtKB-UniRule"/>
</dbReference>
<dbReference type="GO" id="GO:0043419">
    <property type="term" value="P:urea catabolic process"/>
    <property type="evidence" value="ECO:0007669"/>
    <property type="project" value="UniProtKB-UniRule"/>
</dbReference>
<dbReference type="CDD" id="cd00375">
    <property type="entry name" value="Urease_alpha"/>
    <property type="match status" value="1"/>
</dbReference>
<dbReference type="Gene3D" id="3.20.20.140">
    <property type="entry name" value="Metal-dependent hydrolases"/>
    <property type="match status" value="1"/>
</dbReference>
<dbReference type="Gene3D" id="2.30.40.10">
    <property type="entry name" value="Urease, subunit C, domain 1"/>
    <property type="match status" value="1"/>
</dbReference>
<dbReference type="HAMAP" id="MF_01953">
    <property type="entry name" value="Urease_alpha"/>
    <property type="match status" value="1"/>
</dbReference>
<dbReference type="InterPro" id="IPR006680">
    <property type="entry name" value="Amidohydro-rel"/>
</dbReference>
<dbReference type="InterPro" id="IPR011059">
    <property type="entry name" value="Metal-dep_hydrolase_composite"/>
</dbReference>
<dbReference type="InterPro" id="IPR032466">
    <property type="entry name" value="Metal_Hydrolase"/>
</dbReference>
<dbReference type="InterPro" id="IPR011612">
    <property type="entry name" value="Urease_alpha_N_dom"/>
</dbReference>
<dbReference type="InterPro" id="IPR050112">
    <property type="entry name" value="Urease_alpha_subunit"/>
</dbReference>
<dbReference type="InterPro" id="IPR017950">
    <property type="entry name" value="Urease_AS"/>
</dbReference>
<dbReference type="InterPro" id="IPR005848">
    <property type="entry name" value="Urease_asu"/>
</dbReference>
<dbReference type="InterPro" id="IPR017951">
    <property type="entry name" value="Urease_asu_c"/>
</dbReference>
<dbReference type="InterPro" id="IPR029754">
    <property type="entry name" value="Urease_Ni-bd"/>
</dbReference>
<dbReference type="NCBIfam" id="NF009686">
    <property type="entry name" value="PRK13207.1"/>
    <property type="match status" value="1"/>
</dbReference>
<dbReference type="NCBIfam" id="NF009834">
    <property type="entry name" value="PRK13309.1"/>
    <property type="match status" value="1"/>
</dbReference>
<dbReference type="NCBIfam" id="TIGR01792">
    <property type="entry name" value="urease_alph"/>
    <property type="match status" value="1"/>
</dbReference>
<dbReference type="PANTHER" id="PTHR43440">
    <property type="entry name" value="UREASE"/>
    <property type="match status" value="1"/>
</dbReference>
<dbReference type="PANTHER" id="PTHR43440:SF1">
    <property type="entry name" value="UREASE"/>
    <property type="match status" value="1"/>
</dbReference>
<dbReference type="Pfam" id="PF01979">
    <property type="entry name" value="Amidohydro_1"/>
    <property type="match status" value="1"/>
</dbReference>
<dbReference type="Pfam" id="PF00449">
    <property type="entry name" value="Urease_alpha"/>
    <property type="match status" value="1"/>
</dbReference>
<dbReference type="PRINTS" id="PR01752">
    <property type="entry name" value="UREASE"/>
</dbReference>
<dbReference type="SUPFAM" id="SSF51338">
    <property type="entry name" value="Composite domain of metallo-dependent hydrolases"/>
    <property type="match status" value="1"/>
</dbReference>
<dbReference type="SUPFAM" id="SSF51556">
    <property type="entry name" value="Metallo-dependent hydrolases"/>
    <property type="match status" value="1"/>
</dbReference>
<dbReference type="PROSITE" id="PS01120">
    <property type="entry name" value="UREASE_1"/>
    <property type="match status" value="1"/>
</dbReference>
<dbReference type="PROSITE" id="PS00145">
    <property type="entry name" value="UREASE_2"/>
    <property type="match status" value="1"/>
</dbReference>
<dbReference type="PROSITE" id="PS51368">
    <property type="entry name" value="UREASE_3"/>
    <property type="match status" value="1"/>
</dbReference>
<keyword id="KW-0963">Cytoplasm</keyword>
<keyword id="KW-0378">Hydrolase</keyword>
<keyword id="KW-0479">Metal-binding</keyword>
<keyword id="KW-0533">Nickel</keyword>
<accession>B2KAA4</accession>
<gene>
    <name evidence="1" type="primary">ureC</name>
    <name type="ordered locus">YPTS_3058</name>
</gene>
<comment type="catalytic activity">
    <reaction evidence="1">
        <text>urea + 2 H2O + H(+) = hydrogencarbonate + 2 NH4(+)</text>
        <dbReference type="Rhea" id="RHEA:20557"/>
        <dbReference type="ChEBI" id="CHEBI:15377"/>
        <dbReference type="ChEBI" id="CHEBI:15378"/>
        <dbReference type="ChEBI" id="CHEBI:16199"/>
        <dbReference type="ChEBI" id="CHEBI:17544"/>
        <dbReference type="ChEBI" id="CHEBI:28938"/>
        <dbReference type="EC" id="3.5.1.5"/>
    </reaction>
</comment>
<comment type="cofactor">
    <cofactor evidence="1">
        <name>Ni cation</name>
        <dbReference type="ChEBI" id="CHEBI:25516"/>
    </cofactor>
    <text evidence="1">Binds 2 nickel ions per subunit.</text>
</comment>
<comment type="pathway">
    <text evidence="1">Nitrogen metabolism; urea degradation; CO(2) and NH(3) from urea (urease route): step 1/1.</text>
</comment>
<comment type="subunit">
    <text evidence="1">Heterotrimer of UreA (gamma), UreB (beta) and UreC (alpha) subunits. Three heterotrimers associate to form the active enzyme.</text>
</comment>
<comment type="subcellular location">
    <subcellularLocation>
        <location evidence="1">Cytoplasm</location>
    </subcellularLocation>
</comment>
<comment type="PTM">
    <text evidence="1">Carboxylation allows a single lysine to coordinate two nickel ions.</text>
</comment>
<comment type="similarity">
    <text evidence="1">Belongs to the metallo-dependent hydrolases superfamily. Urease alpha subunit family.</text>
</comment>
<organism>
    <name type="scientific">Yersinia pseudotuberculosis serotype IB (strain PB1/+)</name>
    <dbReference type="NCBI Taxonomy" id="502801"/>
    <lineage>
        <taxon>Bacteria</taxon>
        <taxon>Pseudomonadati</taxon>
        <taxon>Pseudomonadota</taxon>
        <taxon>Gammaproteobacteria</taxon>
        <taxon>Enterobacterales</taxon>
        <taxon>Yersiniaceae</taxon>
        <taxon>Yersinia</taxon>
    </lineage>
</organism>